<proteinExistence type="inferred from homology"/>
<comment type="function">
    <text evidence="1">Part of the ABC transporter complex GsiABCD involved in glutathione import. Probably responsible for the translocation of the substrate across the membrane.</text>
</comment>
<comment type="subunit">
    <text evidence="1">The complex is composed of two ATP-binding proteins (GsiA), two transmembrane proteins (GsiC and GsiD) and a solute-binding protein (GsiB).</text>
</comment>
<comment type="subcellular location">
    <subcellularLocation>
        <location evidence="1">Cell inner membrane</location>
        <topology evidence="2">Multi-pass membrane protein</topology>
    </subcellularLocation>
</comment>
<comment type="similarity">
    <text evidence="4">Belongs to the binding-protein-dependent transport system permease family.</text>
</comment>
<feature type="chain" id="PRO_0000279998" description="Glutathione transport system permease protein GsiC">
    <location>
        <begin position="1"/>
        <end position="306"/>
    </location>
</feature>
<feature type="topological domain" description="Cytoplasmic" evidence="2">
    <location>
        <begin position="1"/>
        <end position="8"/>
    </location>
</feature>
<feature type="transmembrane region" description="Helical" evidence="3">
    <location>
        <begin position="9"/>
        <end position="29"/>
    </location>
</feature>
<feature type="topological domain" description="Periplasmic" evidence="2">
    <location>
        <begin position="30"/>
        <end position="102"/>
    </location>
</feature>
<feature type="transmembrane region" description="Helical" evidence="3">
    <location>
        <begin position="103"/>
        <end position="123"/>
    </location>
</feature>
<feature type="topological domain" description="Cytoplasmic" evidence="2">
    <location>
        <begin position="124"/>
        <end position="134"/>
    </location>
</feature>
<feature type="transmembrane region" description="Helical" evidence="3">
    <location>
        <begin position="135"/>
        <end position="155"/>
    </location>
</feature>
<feature type="topological domain" description="Periplasmic" evidence="2">
    <location>
        <begin position="156"/>
        <end position="168"/>
    </location>
</feature>
<feature type="transmembrane region" description="Helical" evidence="3">
    <location>
        <begin position="169"/>
        <end position="189"/>
    </location>
</feature>
<feature type="topological domain" description="Cytoplasmic" evidence="2">
    <location>
        <begin position="190"/>
        <end position="228"/>
    </location>
</feature>
<feature type="transmembrane region" description="Helical" evidence="3">
    <location>
        <begin position="229"/>
        <end position="249"/>
    </location>
</feature>
<feature type="topological domain" description="Periplasmic" evidence="2">
    <location>
        <begin position="250"/>
        <end position="277"/>
    </location>
</feature>
<feature type="transmembrane region" description="Helical" evidence="3">
    <location>
        <begin position="278"/>
        <end position="298"/>
    </location>
</feature>
<feature type="topological domain" description="Cytoplasmic" evidence="2">
    <location>
        <begin position="299"/>
        <end position="306"/>
    </location>
</feature>
<feature type="domain" description="ABC transmembrane type-1" evidence="3">
    <location>
        <begin position="95"/>
        <end position="292"/>
    </location>
</feature>
<gene>
    <name type="primary">gsiC</name>
    <name evidence="1" type="ordered locus">SDY_0756</name>
</gene>
<keyword id="KW-0997">Cell inner membrane</keyword>
<keyword id="KW-1003">Cell membrane</keyword>
<keyword id="KW-0472">Membrane</keyword>
<keyword id="KW-1185">Reference proteome</keyword>
<keyword id="KW-0812">Transmembrane</keyword>
<keyword id="KW-1133">Transmembrane helix</keyword>
<keyword id="KW-0813">Transport</keyword>
<organism>
    <name type="scientific">Shigella dysenteriae serotype 1 (strain Sd197)</name>
    <dbReference type="NCBI Taxonomy" id="300267"/>
    <lineage>
        <taxon>Bacteria</taxon>
        <taxon>Pseudomonadati</taxon>
        <taxon>Pseudomonadota</taxon>
        <taxon>Gammaproteobacteria</taxon>
        <taxon>Enterobacterales</taxon>
        <taxon>Enterobacteriaceae</taxon>
        <taxon>Shigella</taxon>
    </lineage>
</organism>
<dbReference type="EMBL" id="CP000034">
    <property type="protein sequence ID" value="ABB60940.1"/>
    <property type="molecule type" value="Genomic_DNA"/>
</dbReference>
<dbReference type="RefSeq" id="WP_000936043.1">
    <property type="nucleotide sequence ID" value="NC_007606.1"/>
</dbReference>
<dbReference type="RefSeq" id="YP_402429.1">
    <property type="nucleotide sequence ID" value="NC_007606.1"/>
</dbReference>
<dbReference type="SMR" id="Q32IB7"/>
<dbReference type="STRING" id="300267.SDY_0756"/>
<dbReference type="EnsemblBacteria" id="ABB60940">
    <property type="protein sequence ID" value="ABB60940"/>
    <property type="gene ID" value="SDY_0756"/>
</dbReference>
<dbReference type="GeneID" id="86863342"/>
<dbReference type="KEGG" id="sdy:SDY_0756"/>
<dbReference type="PATRIC" id="fig|300267.13.peg.870"/>
<dbReference type="HOGENOM" id="CLU_036879_0_0_6"/>
<dbReference type="Proteomes" id="UP000002716">
    <property type="component" value="Chromosome"/>
</dbReference>
<dbReference type="GO" id="GO:0005886">
    <property type="term" value="C:plasma membrane"/>
    <property type="evidence" value="ECO:0007669"/>
    <property type="project" value="UniProtKB-SubCell"/>
</dbReference>
<dbReference type="GO" id="GO:0055085">
    <property type="term" value="P:transmembrane transport"/>
    <property type="evidence" value="ECO:0007669"/>
    <property type="project" value="InterPro"/>
</dbReference>
<dbReference type="CDD" id="cd06261">
    <property type="entry name" value="TM_PBP2"/>
    <property type="match status" value="1"/>
</dbReference>
<dbReference type="FunFam" id="1.10.3720.10:FF:000024">
    <property type="entry name" value="Glutathione ABC transporter permease GsiC"/>
    <property type="match status" value="1"/>
</dbReference>
<dbReference type="Gene3D" id="1.10.3720.10">
    <property type="entry name" value="MetI-like"/>
    <property type="match status" value="1"/>
</dbReference>
<dbReference type="InterPro" id="IPR045621">
    <property type="entry name" value="BPD_transp_1_N"/>
</dbReference>
<dbReference type="InterPro" id="IPR000515">
    <property type="entry name" value="MetI-like"/>
</dbReference>
<dbReference type="InterPro" id="IPR035906">
    <property type="entry name" value="MetI-like_sf"/>
</dbReference>
<dbReference type="NCBIfam" id="NF011661">
    <property type="entry name" value="PRK15081.1"/>
    <property type="match status" value="1"/>
</dbReference>
<dbReference type="PANTHER" id="PTHR43163">
    <property type="entry name" value="DIPEPTIDE TRANSPORT SYSTEM PERMEASE PROTEIN DPPB-RELATED"/>
    <property type="match status" value="1"/>
</dbReference>
<dbReference type="PANTHER" id="PTHR43163:SF5">
    <property type="entry name" value="GLUTATHIONE TRANSPORT SYSTEM PERMEASE PROTEIN GSIC"/>
    <property type="match status" value="1"/>
</dbReference>
<dbReference type="Pfam" id="PF00528">
    <property type="entry name" value="BPD_transp_1"/>
    <property type="match status" value="1"/>
</dbReference>
<dbReference type="Pfam" id="PF19300">
    <property type="entry name" value="BPD_transp_1_N"/>
    <property type="match status" value="1"/>
</dbReference>
<dbReference type="SUPFAM" id="SSF161098">
    <property type="entry name" value="MetI-like"/>
    <property type="match status" value="1"/>
</dbReference>
<dbReference type="PROSITE" id="PS50928">
    <property type="entry name" value="ABC_TM1"/>
    <property type="match status" value="1"/>
</dbReference>
<protein>
    <recommendedName>
        <fullName evidence="1">Glutathione transport system permease protein GsiC</fullName>
    </recommendedName>
</protein>
<evidence type="ECO:0000250" key="1">
    <source>
        <dbReference type="UniProtKB" id="P75798"/>
    </source>
</evidence>
<evidence type="ECO:0000255" key="2"/>
<evidence type="ECO:0000255" key="3">
    <source>
        <dbReference type="PROSITE-ProRule" id="PRU00441"/>
    </source>
</evidence>
<evidence type="ECO:0000305" key="4"/>
<reference key="1">
    <citation type="journal article" date="2005" name="Nucleic Acids Res.">
        <title>Genome dynamics and diversity of Shigella species, the etiologic agents of bacillary dysentery.</title>
        <authorList>
            <person name="Yang F."/>
            <person name="Yang J."/>
            <person name="Zhang X."/>
            <person name="Chen L."/>
            <person name="Jiang Y."/>
            <person name="Yan Y."/>
            <person name="Tang X."/>
            <person name="Wang J."/>
            <person name="Xiong Z."/>
            <person name="Dong J."/>
            <person name="Xue Y."/>
            <person name="Zhu Y."/>
            <person name="Xu X."/>
            <person name="Sun L."/>
            <person name="Chen S."/>
            <person name="Nie H."/>
            <person name="Peng J."/>
            <person name="Xu J."/>
            <person name="Wang Y."/>
            <person name="Yuan Z."/>
            <person name="Wen Y."/>
            <person name="Yao Z."/>
            <person name="Shen Y."/>
            <person name="Qiang B."/>
            <person name="Hou Y."/>
            <person name="Yu J."/>
            <person name="Jin Q."/>
        </authorList>
    </citation>
    <scope>NUCLEOTIDE SEQUENCE [LARGE SCALE GENOMIC DNA]</scope>
    <source>
        <strain>Sd197</strain>
    </source>
</reference>
<sequence>MLNYVIKRLLGLIPTLFIVSVLVFLFVHMLPGDPARLIAGPEADAQVIELVRQQLGLDQPLYHQFWHYISNAVQGDFGLSMVSRRPVADEIASRFMPTLWLTITSMVWAVIFGMAAGIIAAVWRNRWPDRLSMTIAVSGISFPAFALGMLLIQVFSVELGWLPTVGADSWQHYILPSLTLGAAVAAVMARFTRASFVDVLSEDYMRTARAKGVSETWVVLKHGLRNAMIPVVTMMGLQFGFLLGGSIVVEKVFNWPGLGRLLVDSVEMRDYPVIQAEILLFSLEFILINLVVDVLYAAINPAIRYK</sequence>
<name>GSIC_SHIDS</name>
<accession>Q32IB7</accession>